<name>COG6_HUMAN</name>
<evidence type="ECO:0000250" key="1"/>
<evidence type="ECO:0000269" key="2">
    <source>
    </source>
</evidence>
<evidence type="ECO:0000269" key="3">
    <source>
    </source>
</evidence>
<evidence type="ECO:0000269" key="4">
    <source>
    </source>
</evidence>
<evidence type="ECO:0000269" key="5">
    <source ref="6"/>
</evidence>
<evidence type="ECO:0000303" key="6">
    <source>
    </source>
</evidence>
<evidence type="ECO:0000303" key="7">
    <source ref="6"/>
</evidence>
<evidence type="ECO:0000305" key="8"/>
<organism>
    <name type="scientific">Homo sapiens</name>
    <name type="common">Human</name>
    <dbReference type="NCBI Taxonomy" id="9606"/>
    <lineage>
        <taxon>Eukaryota</taxon>
        <taxon>Metazoa</taxon>
        <taxon>Chordata</taxon>
        <taxon>Craniata</taxon>
        <taxon>Vertebrata</taxon>
        <taxon>Euteleostomi</taxon>
        <taxon>Mammalia</taxon>
        <taxon>Eutheria</taxon>
        <taxon>Euarchontoglires</taxon>
        <taxon>Primates</taxon>
        <taxon>Haplorrhini</taxon>
        <taxon>Catarrhini</taxon>
        <taxon>Hominidae</taxon>
        <taxon>Homo</taxon>
    </lineage>
</organism>
<feature type="chain" id="PRO_0000213513" description="Conserved oligomeric Golgi complex subunit 6">
    <location>
        <begin position="1"/>
        <end position="657"/>
    </location>
</feature>
<feature type="splice variant" id="VSP_040375" description="In isoform 4." evidence="7">
    <original>MLEALKALSTFFVENSLRTRRNL</original>
    <variation>LGILLLSFSWLLFEDSVRDSRRC</variation>
    <location>
        <begin position="53"/>
        <end position="75"/>
    </location>
</feature>
<feature type="splice variant" id="VSP_040376" description="In isoform 4." evidence="7">
    <location>
        <begin position="76"/>
        <end position="657"/>
    </location>
</feature>
<feature type="splice variant" id="VSP_001131" description="In isoform 2." evidence="6">
    <original>EQIVKQ</original>
    <variation>RPPNGP</variation>
    <location>
        <begin position="610"/>
        <end position="615"/>
    </location>
</feature>
<feature type="splice variant" id="VSP_001132" description="In isoform 2." evidence="6">
    <location>
        <begin position="616"/>
        <end position="657"/>
    </location>
</feature>
<feature type="sequence variant" id="VAR_048759" description="In dbSNP:rs3812882." evidence="2 5">
    <original>A</original>
    <variation>T</variation>
    <location>
        <position position="10"/>
    </location>
</feature>
<feature type="sequence variant" id="VAR_048760" description="In dbSNP:rs3812883." evidence="2 5">
    <original>C</original>
    <variation>S</variation>
    <location>
        <position position="32"/>
    </location>
</feature>
<feature type="sequence variant" id="VAR_048761" description="In dbSNP:rs34555836.">
    <original>H</original>
    <variation>Y</variation>
    <location>
        <position position="300"/>
    </location>
</feature>
<feature type="sequence variant" id="VAR_061110" description="In dbSNP:rs41286961.">
    <original>M</original>
    <variation>T</variation>
    <location>
        <position position="447"/>
    </location>
</feature>
<feature type="sequence variant" id="VAR_068240" description="In CDG2L; dbSNP:rs387906959." evidence="3">
    <original>G</original>
    <variation>V</variation>
    <location>
        <position position="549"/>
    </location>
</feature>
<feature type="sequence conflict" description="In Ref. 2; CAH10495." evidence="8" ref="2">
    <original>S</original>
    <variation>F</variation>
    <location>
        <position position="158"/>
    </location>
</feature>
<feature type="sequence conflict" description="In Ref. 2; CAH10495." evidence="8" ref="2">
    <original>N</original>
    <variation>S</variation>
    <location>
        <position position="379"/>
    </location>
</feature>
<gene>
    <name type="primary">COG6</name>
    <name type="synonym">KIAA1134</name>
</gene>
<reference key="1">
    <citation type="journal article" date="2007" name="BMC Genomics">
        <title>The full-ORF clone resource of the German cDNA consortium.</title>
        <authorList>
            <person name="Bechtel S."/>
            <person name="Rosenfelder H."/>
            <person name="Duda A."/>
            <person name="Schmidt C.P."/>
            <person name="Ernst U."/>
            <person name="Wellenreuther R."/>
            <person name="Mehrle A."/>
            <person name="Schuster C."/>
            <person name="Bahr A."/>
            <person name="Bloecker H."/>
            <person name="Heubner D."/>
            <person name="Hoerlein A."/>
            <person name="Michel G."/>
            <person name="Wedler H."/>
            <person name="Koehrer K."/>
            <person name="Ottenwaelder B."/>
            <person name="Poustka A."/>
            <person name="Wiemann S."/>
            <person name="Schupp I."/>
        </authorList>
    </citation>
    <scope>NUCLEOTIDE SEQUENCE [LARGE SCALE MRNA] (ISOFORM 1)</scope>
    <scope>VARIANTS THR-10 AND SER-32</scope>
    <source>
        <tissue>Fetal skin</tissue>
    </source>
</reference>
<reference key="2">
    <citation type="journal article" date="2004" name="Nature">
        <title>The DNA sequence and analysis of human chromosome 13.</title>
        <authorList>
            <person name="Dunham A."/>
            <person name="Matthews L.H."/>
            <person name="Burton J."/>
            <person name="Ashurst J.L."/>
            <person name="Howe K.L."/>
            <person name="Ashcroft K.J."/>
            <person name="Beare D.M."/>
            <person name="Burford D.C."/>
            <person name="Hunt S.E."/>
            <person name="Griffiths-Jones S."/>
            <person name="Jones M.C."/>
            <person name="Keenan S.J."/>
            <person name="Oliver K."/>
            <person name="Scott C.E."/>
            <person name="Ainscough R."/>
            <person name="Almeida J.P."/>
            <person name="Ambrose K.D."/>
            <person name="Andrews D.T."/>
            <person name="Ashwell R.I.S."/>
            <person name="Babbage A.K."/>
            <person name="Bagguley C.L."/>
            <person name="Bailey J."/>
            <person name="Bannerjee R."/>
            <person name="Barlow K.F."/>
            <person name="Bates K."/>
            <person name="Beasley H."/>
            <person name="Bird C.P."/>
            <person name="Bray-Allen S."/>
            <person name="Brown A.J."/>
            <person name="Brown J.Y."/>
            <person name="Burrill W."/>
            <person name="Carder C."/>
            <person name="Carter N.P."/>
            <person name="Chapman J.C."/>
            <person name="Clamp M.E."/>
            <person name="Clark S.Y."/>
            <person name="Clarke G."/>
            <person name="Clee C.M."/>
            <person name="Clegg S.C."/>
            <person name="Cobley V."/>
            <person name="Collins J.E."/>
            <person name="Corby N."/>
            <person name="Coville G.J."/>
            <person name="Deloukas P."/>
            <person name="Dhami P."/>
            <person name="Dunham I."/>
            <person name="Dunn M."/>
            <person name="Earthrowl M.E."/>
            <person name="Ellington A.G."/>
            <person name="Faulkner L."/>
            <person name="Frankish A.G."/>
            <person name="Frankland J."/>
            <person name="French L."/>
            <person name="Garner P."/>
            <person name="Garnett J."/>
            <person name="Gilbert J.G.R."/>
            <person name="Gilson C.J."/>
            <person name="Ghori J."/>
            <person name="Grafham D.V."/>
            <person name="Gribble S.M."/>
            <person name="Griffiths C."/>
            <person name="Hall R.E."/>
            <person name="Hammond S."/>
            <person name="Harley J.L."/>
            <person name="Hart E.A."/>
            <person name="Heath P.D."/>
            <person name="Howden P.J."/>
            <person name="Huckle E.J."/>
            <person name="Hunt P.J."/>
            <person name="Hunt A.R."/>
            <person name="Johnson C."/>
            <person name="Johnson D."/>
            <person name="Kay M."/>
            <person name="Kimberley A.M."/>
            <person name="King A."/>
            <person name="Laird G.K."/>
            <person name="Langford C.J."/>
            <person name="Lawlor S."/>
            <person name="Leongamornlert D.A."/>
            <person name="Lloyd D.M."/>
            <person name="Lloyd C."/>
            <person name="Loveland J.E."/>
            <person name="Lovell J."/>
            <person name="Martin S."/>
            <person name="Mashreghi-Mohammadi M."/>
            <person name="McLaren S.J."/>
            <person name="McMurray A."/>
            <person name="Milne S."/>
            <person name="Moore M.J.F."/>
            <person name="Nickerson T."/>
            <person name="Palmer S.A."/>
            <person name="Pearce A.V."/>
            <person name="Peck A.I."/>
            <person name="Pelan S."/>
            <person name="Phillimore B."/>
            <person name="Porter K.M."/>
            <person name="Rice C.M."/>
            <person name="Searle S."/>
            <person name="Sehra H.K."/>
            <person name="Shownkeen R."/>
            <person name="Skuce C.D."/>
            <person name="Smith M."/>
            <person name="Steward C.A."/>
            <person name="Sycamore N."/>
            <person name="Tester J."/>
            <person name="Thomas D.W."/>
            <person name="Tracey A."/>
            <person name="Tromans A."/>
            <person name="Tubby B."/>
            <person name="Wall M."/>
            <person name="Wallis J.M."/>
            <person name="West A.P."/>
            <person name="Whitehead S.L."/>
            <person name="Willey D.L."/>
            <person name="Wilming L."/>
            <person name="Wray P.W."/>
            <person name="Wright M.W."/>
            <person name="Young L."/>
            <person name="Coulson A."/>
            <person name="Durbin R.M."/>
            <person name="Hubbard T."/>
            <person name="Sulston J.E."/>
            <person name="Beck S."/>
            <person name="Bentley D.R."/>
            <person name="Rogers J."/>
            <person name="Ross M.T."/>
        </authorList>
    </citation>
    <scope>NUCLEOTIDE SEQUENCE [LARGE SCALE GENOMIC DNA]</scope>
</reference>
<reference key="3">
    <citation type="submission" date="2005-07" db="EMBL/GenBank/DDBJ databases">
        <authorList>
            <person name="Mural R.J."/>
            <person name="Istrail S."/>
            <person name="Sutton G.G."/>
            <person name="Florea L."/>
            <person name="Halpern A.L."/>
            <person name="Mobarry C.M."/>
            <person name="Lippert R."/>
            <person name="Walenz B."/>
            <person name="Shatkay H."/>
            <person name="Dew I."/>
            <person name="Miller J.R."/>
            <person name="Flanigan M.J."/>
            <person name="Edwards N.J."/>
            <person name="Bolanos R."/>
            <person name="Fasulo D."/>
            <person name="Halldorsson B.V."/>
            <person name="Hannenhalli S."/>
            <person name="Turner R."/>
            <person name="Yooseph S."/>
            <person name="Lu F."/>
            <person name="Nusskern D.R."/>
            <person name="Shue B.C."/>
            <person name="Zheng X.H."/>
            <person name="Zhong F."/>
            <person name="Delcher A.L."/>
            <person name="Huson D.H."/>
            <person name="Kravitz S.A."/>
            <person name="Mouchard L."/>
            <person name="Reinert K."/>
            <person name="Remington K.A."/>
            <person name="Clark A.G."/>
            <person name="Waterman M.S."/>
            <person name="Eichler E.E."/>
            <person name="Adams M.D."/>
            <person name="Hunkapiller M.W."/>
            <person name="Myers E.W."/>
            <person name="Venter J.C."/>
        </authorList>
    </citation>
    <scope>NUCLEOTIDE SEQUENCE [LARGE SCALE GENOMIC DNA]</scope>
</reference>
<reference key="4">
    <citation type="journal article" date="2004" name="Genome Res.">
        <title>The status, quality, and expansion of the NIH full-length cDNA project: the Mammalian Gene Collection (MGC).</title>
        <authorList>
            <consortium name="The MGC Project Team"/>
        </authorList>
    </citation>
    <scope>NUCLEOTIDE SEQUENCE [LARGE SCALE MRNA] (ISOFORM 1)</scope>
    <source>
        <tissue>Brain</tissue>
    </source>
</reference>
<reference key="5">
    <citation type="journal article" date="1999" name="DNA Res.">
        <title>Characterization of cDNA clones selected by the GeneMark analysis from size-fractionated cDNA libraries from human brain.</title>
        <authorList>
            <person name="Hirosawa M."/>
            <person name="Nagase T."/>
            <person name="Ishikawa K."/>
            <person name="Kikuno R."/>
            <person name="Nomura N."/>
            <person name="Ohara O."/>
        </authorList>
    </citation>
    <scope>NUCLEOTIDE SEQUENCE [LARGE SCALE MRNA] OF 5-657 (ISOFORM 2)</scope>
    <source>
        <tissue>Brain</tissue>
    </source>
</reference>
<reference key="6">
    <citation type="submission" date="1998-12" db="EMBL/GenBank/DDBJ databases">
        <authorList>
            <person name="Wei Y.J."/>
            <person name="Ding J.F."/>
            <person name="Xiong H."/>
            <person name="Zhou Y."/>
            <person name="Hui R.T."/>
            <person name="Liew C.C."/>
        </authorList>
    </citation>
    <scope>NUCLEOTIDE SEQUENCE [MRNA] OF 7-657 (ISOFORM 4)</scope>
    <scope>VARIANTS THR-10 AND SER-32</scope>
    <source>
        <tissue>Aorta</tissue>
    </source>
</reference>
<reference key="7">
    <citation type="journal article" date="2002" name="J. Cell Biol.">
        <title>Characterization of a mammalian Golgi-localized protein complex, COG, that is required for normal Golgi morphology and function.</title>
        <authorList>
            <person name="Ungar D."/>
            <person name="Oka T."/>
            <person name="Brittle E.E."/>
            <person name="Vasile E."/>
            <person name="Lupashin V.V."/>
            <person name="Chatterton J.E."/>
            <person name="Heuser J.E."/>
            <person name="Krieger M."/>
            <person name="Waters M.G."/>
        </authorList>
    </citation>
    <scope>IDENTIFICATION</scope>
</reference>
<reference key="8">
    <citation type="journal article" date="2009" name="Sci. Signal.">
        <title>Quantitative phosphoproteomic analysis of T cell receptor signaling reveals system-wide modulation of protein-protein interactions.</title>
        <authorList>
            <person name="Mayya V."/>
            <person name="Lundgren D.H."/>
            <person name="Hwang S.-I."/>
            <person name="Rezaul K."/>
            <person name="Wu L."/>
            <person name="Eng J.K."/>
            <person name="Rodionov V."/>
            <person name="Han D.K."/>
        </authorList>
    </citation>
    <scope>IDENTIFICATION BY MASS SPECTROMETRY [LARGE SCALE ANALYSIS]</scope>
    <source>
        <tissue>Leukemic T-cell</tissue>
    </source>
</reference>
<reference key="9">
    <citation type="journal article" date="2011" name="BMC Syst. Biol.">
        <title>Initial characterization of the human central proteome.</title>
        <authorList>
            <person name="Burkard T.R."/>
            <person name="Planyavsky M."/>
            <person name="Kaupe I."/>
            <person name="Breitwieser F.P."/>
            <person name="Buerckstuemmer T."/>
            <person name="Bennett K.L."/>
            <person name="Superti-Furga G."/>
            <person name="Colinge J."/>
        </authorList>
    </citation>
    <scope>IDENTIFICATION BY MASS SPECTROMETRY [LARGE SCALE ANALYSIS]</scope>
</reference>
<reference key="10">
    <citation type="journal article" date="2013" name="J. Med. Genet.">
        <title>A novel syndrome of hypohidrosis and intellectual disability is linked to COG6 deficiency.</title>
        <authorList>
            <person name="Shaheen R."/>
            <person name="Ansari S."/>
            <person name="Alshammari M.J."/>
            <person name="Alkhalidi H."/>
            <person name="Alrukban H."/>
            <person name="Eyaid W."/>
            <person name="Alkuraya F.S."/>
        </authorList>
    </citation>
    <scope>INVOLVEMENT IN SHNS</scope>
</reference>
<reference key="11">
    <citation type="journal article" date="2010" name="Hum. Mol. Genet.">
        <title>Fatal outcome due to deficiency of subunit 6 of the conserved oligomeric Golgi complex leading to a new type of congenital disorders of glycosylation.</title>
        <authorList>
            <person name="Lubbehusen J."/>
            <person name="Thiel C."/>
            <person name="Rind N."/>
            <person name="Ungar D."/>
            <person name="Prinsen B.H."/>
            <person name="de Koning T.J."/>
            <person name="van Hasselt P.M."/>
            <person name="Korner C."/>
        </authorList>
    </citation>
    <scope>VARIANT CDG2L VAL-549</scope>
</reference>
<protein>
    <recommendedName>
        <fullName>Conserved oligomeric Golgi complex subunit 6</fullName>
        <shortName>COG complex subunit 6</shortName>
    </recommendedName>
    <alternativeName>
        <fullName>Component of oligomeric Golgi complex 6</fullName>
    </alternativeName>
</protein>
<sequence length="657" mass="73279">MAEGSGEVVAVSATGAANGLNNGAGGTSATTCNPLSRKLHKILETRLDNDKEMLEALKALSTFFVENSLRTRRNLRGDIERKSLAINEEFVSIFKEVKEELESISEDVQAMSNCCQDMTSRLQAAKEQTQDLIVKTTKLQSESQKLEIRAQVADAFLSKFQLTSDEMSLLRGTREGPITEDFFKALGRVKQIHNDVKVLLRTNQQTAGLEIMEQMALLQETAYERLYRWAQSECRTLTQESCDVSPVLTQAMEALQDRPVLYKYTLDEFGTARRSTVVRGFIDALTRGGPGGTPRPIEMHSHDPLRYVGDMLAWLHQATASEKEHLEALLKHVTTQGVEENIQEVVGHITEGVCRPLKVRIEQVIVAEPGAVLLYKISNLLKFYHHTISGIVGNSATALLTTIEEMHLLSKKIFFNSLSLHASKLMDKVELPPPDLGPSSALNQTLMLLREVLASHDSSVVPLDARQADFVQVLSCVLDPLLQMCTVSASNLGTADMATFMVNSLYMMKTTLALFEFTDRRLEMLQFQIEAHLDTLINEQASYVLTRVGLSYIYNTVQQHKPEQGSLANMPNLDSVTLKAAMVQFDRYLSAPDNLLIPQLNFLLSATVKEQIVKQSTELVCRAYGEVYAAVMNPINEYKDPENILHRSPQQVQTLLS</sequence>
<dbReference type="EMBL" id="CR627406">
    <property type="protein sequence ID" value="CAH10495.1"/>
    <property type="molecule type" value="mRNA"/>
</dbReference>
<dbReference type="EMBL" id="AL512505">
    <property type="status" value="NOT_ANNOTATED_CDS"/>
    <property type="molecule type" value="Genomic_DNA"/>
</dbReference>
<dbReference type="EMBL" id="CH471075">
    <property type="protein sequence ID" value="EAX08619.1"/>
    <property type="molecule type" value="Genomic_DNA"/>
</dbReference>
<dbReference type="EMBL" id="BC051723">
    <property type="protein sequence ID" value="AAH51723.1"/>
    <property type="molecule type" value="mRNA"/>
</dbReference>
<dbReference type="EMBL" id="AB032960">
    <property type="protein sequence ID" value="BAA86448.1"/>
    <property type="molecule type" value="mRNA"/>
</dbReference>
<dbReference type="EMBL" id="AF116827">
    <property type="protein sequence ID" value="AAD29633.1"/>
    <property type="status" value="ALT_SEQ"/>
    <property type="molecule type" value="mRNA"/>
</dbReference>
<dbReference type="CCDS" id="CCDS45042.1">
    <molecule id="Q9Y2V7-2"/>
</dbReference>
<dbReference type="CCDS" id="CCDS9370.1">
    <molecule id="Q9Y2V7-1"/>
</dbReference>
<dbReference type="RefSeq" id="NP_001138551.1">
    <molecule id="Q9Y2V7-2"/>
    <property type="nucleotide sequence ID" value="NM_001145079.2"/>
</dbReference>
<dbReference type="RefSeq" id="NP_065802.1">
    <molecule id="Q9Y2V7-1"/>
    <property type="nucleotide sequence ID" value="NM_020751.3"/>
</dbReference>
<dbReference type="SMR" id="Q9Y2V7"/>
<dbReference type="BioGRID" id="121575">
    <property type="interactions" value="180"/>
</dbReference>
<dbReference type="ComplexPortal" id="CPX-6199">
    <property type="entry name" value="COG tethering complex"/>
</dbReference>
<dbReference type="CORUM" id="Q9Y2V7"/>
<dbReference type="DIP" id="DIP-48931N"/>
<dbReference type="FunCoup" id="Q9Y2V7">
    <property type="interactions" value="1619"/>
</dbReference>
<dbReference type="IntAct" id="Q9Y2V7">
    <property type="interactions" value="157"/>
</dbReference>
<dbReference type="MINT" id="Q9Y2V7"/>
<dbReference type="STRING" id="9606.ENSP00000397441"/>
<dbReference type="ChEMBL" id="CHEMBL4105962"/>
<dbReference type="GlyGen" id="Q9Y2V7">
    <property type="glycosylation" value="3 sites, 1 O-linked glycan (2 sites)"/>
</dbReference>
<dbReference type="iPTMnet" id="Q9Y2V7"/>
<dbReference type="MetOSite" id="Q9Y2V7"/>
<dbReference type="PhosphoSitePlus" id="Q9Y2V7"/>
<dbReference type="BioMuta" id="COG6"/>
<dbReference type="DMDM" id="182676410"/>
<dbReference type="jPOST" id="Q9Y2V7"/>
<dbReference type="MassIVE" id="Q9Y2V7"/>
<dbReference type="PaxDb" id="9606-ENSP00000397441"/>
<dbReference type="PeptideAtlas" id="Q9Y2V7"/>
<dbReference type="ProteomicsDB" id="85911">
    <molecule id="Q9Y2V7-1"/>
</dbReference>
<dbReference type="ProteomicsDB" id="85912">
    <molecule id="Q9Y2V7-2"/>
</dbReference>
<dbReference type="ProteomicsDB" id="85913">
    <molecule id="Q9Y2V7-4"/>
</dbReference>
<dbReference type="Pumba" id="Q9Y2V7"/>
<dbReference type="Antibodypedia" id="23303">
    <property type="antibodies" value="231 antibodies from 25 providers"/>
</dbReference>
<dbReference type="DNASU" id="57511"/>
<dbReference type="Ensembl" id="ENST00000356576.8">
    <molecule id="Q9Y2V7-4"/>
    <property type="protein sequence ID" value="ENSP00000348983.4"/>
    <property type="gene ID" value="ENSG00000133103.18"/>
</dbReference>
<dbReference type="Ensembl" id="ENST00000416691.6">
    <molecule id="Q9Y2V7-2"/>
    <property type="protein sequence ID" value="ENSP00000403733.1"/>
    <property type="gene ID" value="ENSG00000133103.18"/>
</dbReference>
<dbReference type="Ensembl" id="ENST00000455146.8">
    <molecule id="Q9Y2V7-1"/>
    <property type="protein sequence ID" value="ENSP00000397441.2"/>
    <property type="gene ID" value="ENSG00000133103.18"/>
</dbReference>
<dbReference type="GeneID" id="57511"/>
<dbReference type="KEGG" id="hsa:57511"/>
<dbReference type="MANE-Select" id="ENST00000455146.8">
    <property type="protein sequence ID" value="ENSP00000397441.2"/>
    <property type="RefSeq nucleotide sequence ID" value="NM_020751.3"/>
    <property type="RefSeq protein sequence ID" value="NP_065802.1"/>
</dbReference>
<dbReference type="UCSC" id="uc001uxh.3">
    <molecule id="Q9Y2V7-1"/>
    <property type="organism name" value="human"/>
</dbReference>
<dbReference type="AGR" id="HGNC:18621"/>
<dbReference type="CTD" id="57511"/>
<dbReference type="DisGeNET" id="57511"/>
<dbReference type="GeneCards" id="COG6"/>
<dbReference type="GeneReviews" id="COG6"/>
<dbReference type="HGNC" id="HGNC:18621">
    <property type="gene designation" value="COG6"/>
</dbReference>
<dbReference type="HPA" id="ENSG00000133103">
    <property type="expression patterns" value="Low tissue specificity"/>
</dbReference>
<dbReference type="MalaCards" id="COG6"/>
<dbReference type="MIM" id="606977">
    <property type="type" value="gene"/>
</dbReference>
<dbReference type="MIM" id="614576">
    <property type="type" value="phenotype"/>
</dbReference>
<dbReference type="MIM" id="615328">
    <property type="type" value="phenotype"/>
</dbReference>
<dbReference type="neXtProt" id="NX_Q9Y2V7"/>
<dbReference type="OpenTargets" id="ENSG00000133103"/>
<dbReference type="Orphanet" id="464443">
    <property type="disease" value="COG6-CGD"/>
</dbReference>
<dbReference type="Orphanet" id="363523">
    <property type="disease" value="Hypohidrosis-enamel hypoplasia-palmoplantar keratoderma-intellectual disability syndrome"/>
</dbReference>
<dbReference type="PharmGKB" id="PA38604"/>
<dbReference type="VEuPathDB" id="HostDB:ENSG00000133103"/>
<dbReference type="eggNOG" id="KOG3758">
    <property type="taxonomic scope" value="Eukaryota"/>
</dbReference>
<dbReference type="GeneTree" id="ENSGT00390000013518"/>
<dbReference type="HOGENOM" id="CLU_011361_3_0_1"/>
<dbReference type="InParanoid" id="Q9Y2V7"/>
<dbReference type="OMA" id="HSCLDFF"/>
<dbReference type="OrthoDB" id="272987at2759"/>
<dbReference type="PAN-GO" id="Q9Y2V7">
    <property type="GO annotations" value="2 GO annotations based on evolutionary models"/>
</dbReference>
<dbReference type="PhylomeDB" id="Q9Y2V7"/>
<dbReference type="TreeFam" id="TF314527"/>
<dbReference type="PathwayCommons" id="Q9Y2V7"/>
<dbReference type="Reactome" id="R-HSA-6807878">
    <property type="pathway name" value="COPI-mediated anterograde transport"/>
</dbReference>
<dbReference type="Reactome" id="R-HSA-6811438">
    <property type="pathway name" value="Intra-Golgi traffic"/>
</dbReference>
<dbReference type="Reactome" id="R-HSA-6811440">
    <property type="pathway name" value="Retrograde transport at the Trans-Golgi-Network"/>
</dbReference>
<dbReference type="SignaLink" id="Q9Y2V7"/>
<dbReference type="BioGRID-ORCS" id="57511">
    <property type="hits" value="192 hits in 1161 CRISPR screens"/>
</dbReference>
<dbReference type="ChiTaRS" id="COG6">
    <property type="organism name" value="human"/>
</dbReference>
<dbReference type="GenomeRNAi" id="57511"/>
<dbReference type="Pharos" id="Q9Y2V7">
    <property type="development level" value="Tbio"/>
</dbReference>
<dbReference type="PRO" id="PR:Q9Y2V7"/>
<dbReference type="Proteomes" id="UP000005640">
    <property type="component" value="Chromosome 13"/>
</dbReference>
<dbReference type="RNAct" id="Q9Y2V7">
    <property type="molecule type" value="protein"/>
</dbReference>
<dbReference type="Bgee" id="ENSG00000133103">
    <property type="expression patterns" value="Expressed in secondary oocyte and 190 other cell types or tissues"/>
</dbReference>
<dbReference type="ExpressionAtlas" id="Q9Y2V7">
    <property type="expression patterns" value="baseline and differential"/>
</dbReference>
<dbReference type="GO" id="GO:0000139">
    <property type="term" value="C:Golgi membrane"/>
    <property type="evidence" value="ECO:0000304"/>
    <property type="project" value="Reactome"/>
</dbReference>
<dbReference type="GO" id="GO:0017119">
    <property type="term" value="C:Golgi transport complex"/>
    <property type="evidence" value="ECO:0000314"/>
    <property type="project" value="UniProtKB"/>
</dbReference>
<dbReference type="GO" id="GO:0032588">
    <property type="term" value="C:trans-Golgi network membrane"/>
    <property type="evidence" value="ECO:0000304"/>
    <property type="project" value="Reactome"/>
</dbReference>
<dbReference type="GO" id="GO:0070085">
    <property type="term" value="P:glycosylation"/>
    <property type="evidence" value="ECO:0000315"/>
    <property type="project" value="UniProtKB"/>
</dbReference>
<dbReference type="GO" id="GO:0007030">
    <property type="term" value="P:Golgi organization"/>
    <property type="evidence" value="ECO:0000315"/>
    <property type="project" value="ComplexPortal"/>
</dbReference>
<dbReference type="GO" id="GO:0006891">
    <property type="term" value="P:intra-Golgi vesicle-mediated transport"/>
    <property type="evidence" value="ECO:0000318"/>
    <property type="project" value="GO_Central"/>
</dbReference>
<dbReference type="GO" id="GO:0015031">
    <property type="term" value="P:protein transport"/>
    <property type="evidence" value="ECO:0007669"/>
    <property type="project" value="UniProtKB-KW"/>
</dbReference>
<dbReference type="GO" id="GO:0000301">
    <property type="term" value="P:retrograde transport, vesicle recycling within Golgi"/>
    <property type="evidence" value="ECO:0000315"/>
    <property type="project" value="ComplexPortal"/>
</dbReference>
<dbReference type="InterPro" id="IPR010490">
    <property type="entry name" value="COG6"/>
</dbReference>
<dbReference type="InterPro" id="IPR048369">
    <property type="entry name" value="COG6_C"/>
</dbReference>
<dbReference type="InterPro" id="IPR048368">
    <property type="entry name" value="COG6_N"/>
</dbReference>
<dbReference type="PANTHER" id="PTHR21506">
    <property type="entry name" value="COMPONENT OF OLIGOMERIC GOLGI COMPLEX 6"/>
    <property type="match status" value="1"/>
</dbReference>
<dbReference type="PANTHER" id="PTHR21506:SF0">
    <property type="entry name" value="CONSERVED OLIGOMERIC GOLGI COMPLEX SUBUNIT 6"/>
    <property type="match status" value="1"/>
</dbReference>
<dbReference type="Pfam" id="PF20653">
    <property type="entry name" value="COG6_C"/>
    <property type="match status" value="1"/>
</dbReference>
<dbReference type="Pfam" id="PF06419">
    <property type="entry name" value="COG6_N"/>
    <property type="match status" value="1"/>
</dbReference>
<dbReference type="SMART" id="SM01087">
    <property type="entry name" value="COG6"/>
    <property type="match status" value="1"/>
</dbReference>
<accession>Q9Y2V7</accession>
<accession>Q5T0U1</accession>
<accession>Q6AI19</accession>
<accession>Q86V49</accession>
<accession>Q9ULT5</accession>
<comment type="function">
    <text evidence="1">Required for normal Golgi function.</text>
</comment>
<comment type="subunit">
    <text evidence="1">Component of the conserved oligomeric Golgi complex which is composed of eight different subunits and is required for normal Golgi morphology and localization.</text>
</comment>
<comment type="interaction">
    <interactant intactId="EBI-3866319">
        <id>Q9Y2V7</id>
    </interactant>
    <interactant intactId="EBI-602199">
        <id>Q12774</id>
        <label>ARHGEF5</label>
    </interactant>
    <organismsDiffer>false</organismsDiffer>
    <experiments>5</experiments>
</comment>
<comment type="interaction">
    <interactant intactId="EBI-3866319">
        <id>Q9Y2V7</id>
    </interactant>
    <interactant intactId="EBI-9092016">
        <id>Q9UQB8-6</id>
        <label>BAIAP2</label>
    </interactant>
    <organismsDiffer>false</organismsDiffer>
    <experiments>3</experiments>
</comment>
<comment type="interaction">
    <interactant intactId="EBI-3866319">
        <id>Q9Y2V7</id>
    </interactant>
    <interactant intactId="EBI-958922">
        <id>O95999</id>
        <label>BCL10</label>
    </interactant>
    <organismsDiffer>false</organismsDiffer>
    <experiments>5</experiments>
</comment>
<comment type="interaction">
    <interactant intactId="EBI-3866319">
        <id>Q9Y2V7</id>
    </interactant>
    <interactant intactId="EBI-744311">
        <id>Q8IYX3</id>
        <label>CCDC116</label>
    </interactant>
    <organismsDiffer>false</organismsDiffer>
    <experiments>3</experiments>
</comment>
<comment type="interaction">
    <interactant intactId="EBI-3866319">
        <id>Q9Y2V7</id>
    </interactant>
    <interactant intactId="EBI-744556">
        <id>Q96HB5</id>
        <label>CCDC120</label>
    </interactant>
    <organismsDiffer>false</organismsDiffer>
    <experiments>3</experiments>
</comment>
<comment type="interaction">
    <interactant intactId="EBI-3866319">
        <id>Q9Y2V7</id>
    </interactant>
    <interactant intactId="EBI-10175300">
        <id>Q8TD31-3</id>
        <label>CCHCR1</label>
    </interactant>
    <organismsDiffer>false</organismsDiffer>
    <experiments>5</experiments>
</comment>
<comment type="interaction">
    <interactant intactId="EBI-3866319">
        <id>Q9Y2V7</id>
    </interactant>
    <interactant intactId="EBI-741032">
        <id>Q8NE01</id>
        <label>CNNM3</label>
    </interactant>
    <organismsDiffer>false</organismsDiffer>
    <experiments>3</experiments>
</comment>
<comment type="interaction">
    <interactant intactId="EBI-3866319">
        <id>Q9Y2V7</id>
    </interactant>
    <interactant intactId="EBI-2959737">
        <id>Q16527</id>
        <label>CSRP2</label>
    </interactant>
    <organismsDiffer>false</organismsDiffer>
    <experiments>3</experiments>
</comment>
<comment type="interaction">
    <interactant intactId="EBI-3866319">
        <id>Q9Y2V7</id>
    </interactant>
    <interactant intactId="EBI-1057139">
        <id>Q93034</id>
        <label>CUL5</label>
    </interactant>
    <organismsDiffer>false</organismsDiffer>
    <experiments>3</experiments>
</comment>
<comment type="interaction">
    <interactant intactId="EBI-3866319">
        <id>Q9Y2V7</id>
    </interactant>
    <interactant intactId="EBI-12021848">
        <id>Q8NF50-4</id>
        <label>DOCK8</label>
    </interactant>
    <organismsDiffer>false</organismsDiffer>
    <experiments>3</experiments>
</comment>
<comment type="interaction">
    <interactant intactId="EBI-3866319">
        <id>Q9Y2V7</id>
    </interactant>
    <interactant intactId="EBI-11984733">
        <id>O60941-5</id>
        <label>DTNB</label>
    </interactant>
    <organismsDiffer>false</organismsDiffer>
    <experiments>3</experiments>
</comment>
<comment type="interaction">
    <interactant intactId="EBI-3866319">
        <id>Q9Y2V7</id>
    </interactant>
    <interactant intactId="EBI-1752811">
        <id>Q9BQ89</id>
        <label>FAM110A</label>
    </interactant>
    <organismsDiffer>false</organismsDiffer>
    <experiments>3</experiments>
</comment>
<comment type="interaction">
    <interactant intactId="EBI-3866319">
        <id>Q9Y2V7</id>
    </interactant>
    <interactant intactId="EBI-6658203">
        <id>Q86YD7</id>
        <label>FAM90A1</label>
    </interactant>
    <organismsDiffer>false</organismsDiffer>
    <experiments>5</experiments>
</comment>
<comment type="interaction">
    <interactant intactId="EBI-3866319">
        <id>Q9Y2V7</id>
    </interactant>
    <interactant intactId="EBI-744935">
        <id>Q9BVV2</id>
        <label>FNDC11</label>
    </interactant>
    <organismsDiffer>false</organismsDiffer>
    <experiments>3</experiments>
</comment>
<comment type="interaction">
    <interactant intactId="EBI-3866319">
        <id>Q9Y2V7</id>
    </interactant>
    <interactant intactId="EBI-1052570">
        <id>O95995</id>
        <label>GAS8</label>
    </interactant>
    <organismsDiffer>false</organismsDiffer>
    <experiments>3</experiments>
</comment>
<comment type="interaction">
    <interactant intactId="EBI-3866319">
        <id>Q9Y2V7</id>
    </interactant>
    <interactant intactId="EBI-744104">
        <id>P55040</id>
        <label>GEM</label>
    </interactant>
    <organismsDiffer>false</organismsDiffer>
    <experiments>3</experiments>
</comment>
<comment type="interaction">
    <interactant intactId="EBI-3866319">
        <id>Q9Y2V7</id>
    </interactant>
    <interactant intactId="EBI-11955401">
        <id>Q86VF2-5</id>
        <label>IGFN1</label>
    </interactant>
    <organismsDiffer>false</organismsDiffer>
    <experiments>3</experiments>
</comment>
<comment type="interaction">
    <interactant intactId="EBI-3866319">
        <id>Q9Y2V7</id>
    </interactant>
    <interactant intactId="EBI-2556193">
        <id>Q63ZY3</id>
        <label>KANK2</label>
    </interactant>
    <organismsDiffer>false</organismsDiffer>
    <experiments>3</experiments>
</comment>
<comment type="interaction">
    <interactant intactId="EBI-3866319">
        <id>Q9Y2V7</id>
    </interactant>
    <interactant intactId="EBI-2798728">
        <id>P61968</id>
        <label>LMO4</label>
    </interactant>
    <organismsDiffer>false</organismsDiffer>
    <experiments>3</experiments>
</comment>
<comment type="interaction">
    <interactant intactId="EBI-3866319">
        <id>Q9Y2V7</id>
    </interactant>
    <interactant intactId="EBI-1048159">
        <id>P55081</id>
        <label>MFAP1</label>
    </interactant>
    <organismsDiffer>false</organismsDiffer>
    <experiments>3</experiments>
</comment>
<comment type="interaction">
    <interactant intactId="EBI-3866319">
        <id>Q9Y2V7</id>
    </interactant>
    <interactant intactId="EBI-14086479">
        <id>Q8IVT4</id>
        <label>MGC50722</label>
    </interactant>
    <organismsDiffer>false</organismsDiffer>
    <experiments>3</experiments>
</comment>
<comment type="interaction">
    <interactant intactId="EBI-3866319">
        <id>Q9Y2V7</id>
    </interactant>
    <interactant intactId="EBI-747381">
        <id>Q9BV20</id>
        <label>MRI1</label>
    </interactant>
    <organismsDiffer>false</organismsDiffer>
    <experiments>3</experiments>
</comment>
<comment type="interaction">
    <interactant intactId="EBI-3866319">
        <id>Q9Y2V7</id>
    </interactant>
    <interactant intactId="EBI-11750983">
        <id>Q9HC98-4</id>
        <label>NEK6</label>
    </interactant>
    <organismsDiffer>false</organismsDiffer>
    <experiments>3</experiments>
</comment>
<comment type="interaction">
    <interactant intactId="EBI-3866319">
        <id>Q9Y2V7</id>
    </interactant>
    <interactant intactId="EBI-741158">
        <id>Q96HA8</id>
        <label>NTAQ1</label>
    </interactant>
    <organismsDiffer>false</organismsDiffer>
    <experiments>5</experiments>
</comment>
<comment type="interaction">
    <interactant intactId="EBI-3866319">
        <id>Q9Y2V7</id>
    </interactant>
    <interactant intactId="EBI-2811583">
        <id>Q9BVL2</id>
        <label>NUP58</label>
    </interactant>
    <organismsDiffer>false</organismsDiffer>
    <experiments>3</experiments>
</comment>
<comment type="interaction">
    <interactant intactId="EBI-3866319">
        <id>Q9Y2V7</id>
    </interactant>
    <interactant intactId="EBI-12081862">
        <id>P00973-2</id>
        <label>OAS1</label>
    </interactant>
    <organismsDiffer>false</organismsDiffer>
    <experiments>3</experiments>
</comment>
<comment type="interaction">
    <interactant intactId="EBI-3866319">
        <id>Q9Y2V7</id>
    </interactant>
    <interactant intactId="EBI-4401947">
        <id>Q9HB19</id>
        <label>PLEKHA2</label>
    </interactant>
    <organismsDiffer>false</organismsDiffer>
    <experiments>3</experiments>
</comment>
<comment type="interaction">
    <interactant intactId="EBI-3866319">
        <id>Q9Y2V7</id>
    </interactant>
    <interactant intactId="EBI-11956563">
        <id>Q96HA1-2</id>
        <label>POM121</label>
    </interactant>
    <organismsDiffer>false</organismsDiffer>
    <experiments>3</experiments>
</comment>
<comment type="interaction">
    <interactant intactId="EBI-3866319">
        <id>Q9Y2V7</id>
    </interactant>
    <interactant intactId="EBI-2557469">
        <id>Q6NYC8</id>
        <label>PPP1R18</label>
    </interactant>
    <organismsDiffer>false</organismsDiffer>
    <experiments>3</experiments>
</comment>
<comment type="interaction">
    <interactant intactId="EBI-3866319">
        <id>Q9Y2V7</id>
    </interactant>
    <interactant intactId="EBI-359352">
        <id>P25786</id>
        <label>PSMA1</label>
    </interactant>
    <organismsDiffer>false</organismsDiffer>
    <experiments>3</experiments>
</comment>
<comment type="interaction">
    <interactant intactId="EBI-3866319">
        <id>Q9Y2V7</id>
    </interactant>
    <interactant intactId="EBI-372273">
        <id>P20618</id>
        <label>PSMB1</label>
    </interactant>
    <organismsDiffer>false</organismsDiffer>
    <experiments>3</experiments>
</comment>
<comment type="interaction">
    <interactant intactId="EBI-3866319">
        <id>Q9Y2V7</id>
    </interactant>
    <interactant intactId="EBI-347462">
        <id>P47897</id>
        <label>QARS1</label>
    </interactant>
    <organismsDiffer>false</organismsDiffer>
    <experiments>3</experiments>
</comment>
<comment type="interaction">
    <interactant intactId="EBI-3866319">
        <id>Q9Y2V7</id>
    </interactant>
    <interactant intactId="EBI-743796">
        <id>Q8TBN0</id>
        <label>RAB3IL1</label>
    </interactant>
    <organismsDiffer>false</organismsDiffer>
    <experiments>3</experiments>
</comment>
<comment type="interaction">
    <interactant intactId="EBI-3866319">
        <id>Q9Y2V7</id>
    </interactant>
    <interactant intactId="EBI-1760079">
        <id>Q9NRW1</id>
        <label>RAB6B</label>
    </interactant>
    <organismsDiffer>false</organismsDiffer>
    <experiments>5</experiments>
</comment>
<comment type="interaction">
    <interactant intactId="EBI-3866319">
        <id>Q9Y2V7</id>
    </interactant>
    <interactant intactId="EBI-748350">
        <id>Q9UHP6</id>
        <label>RSPH14</label>
    </interactant>
    <organismsDiffer>false</organismsDiffer>
    <experiments>3</experiments>
</comment>
<comment type="interaction">
    <interactant intactId="EBI-3866319">
        <id>Q9Y2V7</id>
    </interactant>
    <interactant intactId="EBI-10217913">
        <id>Q14D33</id>
        <label>RTP5</label>
    </interactant>
    <organismsDiffer>false</organismsDiffer>
    <experiments>3</experiments>
</comment>
<comment type="interaction">
    <interactant intactId="EBI-3866319">
        <id>Q9Y2V7</id>
    </interactant>
    <interactant intactId="EBI-11984663">
        <id>Q06455-2</id>
        <label>RUNX1T1</label>
    </interactant>
    <organismsDiffer>false</organismsDiffer>
    <experiments>3</experiments>
</comment>
<comment type="interaction">
    <interactant intactId="EBI-3866319">
        <id>Q9Y2V7</id>
    </interactant>
    <interactant intactId="EBI-12000762">
        <id>Q7Z5V6-2</id>
        <label>SAXO4</label>
    </interactant>
    <organismsDiffer>false</organismsDiffer>
    <experiments>3</experiments>
</comment>
<comment type="interaction">
    <interactant intactId="EBI-3866319">
        <id>Q9Y2V7</id>
    </interactant>
    <interactant intactId="EBI-748391">
        <id>Q9BWG6</id>
        <label>SCNM1</label>
    </interactant>
    <organismsDiffer>false</organismsDiffer>
    <experiments>5</experiments>
</comment>
<comment type="interaction">
    <interactant intactId="EBI-3866319">
        <id>Q9Y2V7</id>
    </interactant>
    <interactant intactId="EBI-358489">
        <id>Q96GM5</id>
        <label>SMARCD1</label>
    </interactant>
    <organismsDiffer>false</organismsDiffer>
    <experiments>3</experiments>
</comment>
<comment type="interaction">
    <interactant intactId="EBI-3866319">
        <id>Q9Y2V7</id>
    </interactant>
    <interactant intactId="EBI-1045459">
        <id>O95863</id>
        <label>SNAI1</label>
    </interactant>
    <organismsDiffer>false</organismsDiffer>
    <experiments>3</experiments>
</comment>
<comment type="interaction">
    <interactant intactId="EBI-3866319">
        <id>Q9Y2V7</id>
    </interactant>
    <interactant intactId="EBI-490676">
        <id>O95721</id>
        <label>SNAP29</label>
    </interactant>
    <organismsDiffer>false</organismsDiffer>
    <experiments>5</experiments>
</comment>
<comment type="interaction">
    <interactant intactId="EBI-3866319">
        <id>Q9Y2V7</id>
    </interactant>
    <interactant intactId="EBI-372475">
        <id>P14678-2</id>
        <label>SNRPB</label>
    </interactant>
    <organismsDiffer>false</organismsDiffer>
    <experiments>3</experiments>
</comment>
<comment type="interaction">
    <interactant intactId="EBI-3866319">
        <id>Q9Y2V7</id>
    </interactant>
    <interactant intactId="EBI-742688">
        <id>Q9NZD8</id>
        <label>SPG21</label>
    </interactant>
    <organismsDiffer>false</organismsDiffer>
    <experiments>3</experiments>
</comment>
<comment type="interaction">
    <interactant intactId="EBI-3866319">
        <id>Q9Y2V7</id>
    </interactant>
    <interactant intactId="EBI-745392">
        <id>Q9BSW7</id>
        <label>SYT17</label>
    </interactant>
    <organismsDiffer>false</organismsDiffer>
    <experiments>3</experiments>
</comment>
<comment type="interaction">
    <interactant intactId="EBI-3866319">
        <id>Q9Y2V7</id>
    </interactant>
    <interactant intactId="EBI-8787464">
        <id>Q9NU19</id>
        <label>TBC1D22B</label>
    </interactant>
    <organismsDiffer>false</organismsDiffer>
    <experiments>3</experiments>
</comment>
<comment type="interaction">
    <interactant intactId="EBI-3866319">
        <id>Q9Y2V7</id>
    </interactant>
    <interactant intactId="EBI-712598">
        <id>P62328</id>
        <label>TMSB4X</label>
    </interactant>
    <organismsDiffer>false</organismsDiffer>
    <experiments>3</experiments>
</comment>
<comment type="interaction">
    <interactant intactId="EBI-3866319">
        <id>Q9Y2V7</id>
    </interactant>
    <interactant intactId="EBI-744794">
        <id>Q9BZW7</id>
        <label>TSGA10</label>
    </interactant>
    <organismsDiffer>false</organismsDiffer>
    <experiments>3</experiments>
</comment>
<comment type="interaction">
    <interactant intactId="EBI-3866319">
        <id>Q9Y2V7</id>
    </interactant>
    <interactant intactId="EBI-9053916">
        <id>Q63HK5</id>
        <label>TSHZ3</label>
    </interactant>
    <organismsDiffer>false</organismsDiffer>
    <experiments>3</experiments>
</comment>
<comment type="interaction">
    <interactant intactId="EBI-3866319">
        <id>Q9Y2V7</id>
    </interactant>
    <interactant intactId="EBI-21353855">
        <id>Q99598</id>
        <label>TSNAX</label>
    </interactant>
    <organismsDiffer>false</organismsDiffer>
    <experiments>3</experiments>
</comment>
<comment type="interaction">
    <interactant intactId="EBI-3866319">
        <id>Q9Y2V7</id>
    </interactant>
    <interactant intactId="EBI-12006098">
        <id>Q86TV6</id>
        <label>TTC7B</label>
    </interactant>
    <organismsDiffer>false</organismsDiffer>
    <experiments>3</experiments>
</comment>
<comment type="interaction">
    <interactant intactId="EBI-3866319">
        <id>Q9Y2V7</id>
    </interactant>
    <interactant intactId="EBI-12068150">
        <id>Q6NVU6</id>
        <label>UFSP1</label>
    </interactant>
    <organismsDiffer>false</organismsDiffer>
    <experiments>3</experiments>
</comment>
<comment type="interaction">
    <interactant intactId="EBI-3866319">
        <id>Q9Y2V7</id>
    </interactant>
    <interactant intactId="EBI-712969">
        <id>Q9Y3C0</id>
        <label>WASHC3</label>
    </interactant>
    <organismsDiffer>false</organismsDiffer>
    <experiments>4</experiments>
</comment>
<comment type="interaction">
    <interactant intactId="EBI-3866319">
        <id>Q9Y2V7</id>
    </interactant>
    <interactant intactId="EBI-711925">
        <id>Q05516</id>
        <label>ZBTB16</label>
    </interactant>
    <organismsDiffer>false</organismsDiffer>
    <experiments>5</experiments>
</comment>
<comment type="interaction">
    <interactant intactId="EBI-3866319">
        <id>Q9Y2V7</id>
    </interactant>
    <interactant intactId="EBI-6448783">
        <id>G3V1X1</id>
        <label>ZFC3H1</label>
    </interactant>
    <organismsDiffer>false</organismsDiffer>
    <experiments>3</experiments>
</comment>
<comment type="interaction">
    <interactant intactId="EBI-3866319">
        <id>Q9Y2V7</id>
    </interactant>
    <interactant intactId="EBI-740727">
        <id>Q8TAU3</id>
        <label>ZNF417</label>
    </interactant>
    <organismsDiffer>false</organismsDiffer>
    <experiments>3</experiments>
</comment>
<comment type="interaction">
    <interactant intactId="EBI-3866319">
        <id>Q9Y2V7</id>
    </interactant>
    <interactant intactId="EBI-25475920">
        <id>PRO_0000449631</id>
        <label>rep</label>
        <dbReference type="UniProtKB" id="P0DTD1"/>
    </interactant>
    <organismsDiffer>true</organismsDiffer>
    <experiments>3</experiments>
</comment>
<comment type="interaction">
    <interactant intactId="EBI-3866319">
        <id>Q9Y2V7</id>
    </interactant>
    <interactant intactId="EBI-25492395">
        <id>PRO_0000449633</id>
        <label>rep</label>
        <dbReference type="UniProtKB" id="P0DTD1"/>
    </interactant>
    <organismsDiffer>true</organismsDiffer>
    <experiments>3</experiments>
</comment>
<comment type="subcellular location">
    <subcellularLocation>
        <location evidence="1">Golgi apparatus membrane</location>
        <topology evidence="1">Peripheral membrane protein</topology>
    </subcellularLocation>
</comment>
<comment type="alternative products">
    <event type="alternative splicing"/>
    <isoform>
        <id>Q9Y2V7-1</id>
        <name>1</name>
        <sequence type="displayed"/>
    </isoform>
    <isoform>
        <id>Q9Y2V7-2</id>
        <name>2</name>
        <sequence type="described" ref="VSP_001131 VSP_001132"/>
    </isoform>
    <isoform>
        <id>Q9Y2V7-4</id>
        <name>4</name>
        <sequence type="described" ref="VSP_040375 VSP_040376"/>
    </isoform>
</comment>
<comment type="disease" evidence="3">
    <disease id="DI-03458">
        <name>Congenital disorder of glycosylation 2L</name>
        <acronym>CDG2L</acronym>
        <description>A multisystem disorder caused by a defect in glycoprotein biosynthesis and characterized by under-glycosylated serum glycoproteins. Congenital disorders of glycosylation result in a wide variety of clinical features, such as defects in the nervous system development, psychomotor retardation, dysmorphic features, hypotonia, coagulation disorders, and immunodeficiency. The broad spectrum of features reflects the critical role of N-glycoproteins during embryonic development, differentiation, and maintenance of cell functions. Clinical features of CDG2L include neonatal intractable focal seizures, vomiting, loss of consciousness, intracranial bleeding due to vitamin K deficiency, and death in infancy.</description>
        <dbReference type="MIM" id="614576"/>
    </disease>
    <text>The disease is caused by variants affecting the gene represented in this entry.</text>
</comment>
<comment type="disease" evidence="4">
    <disease id="DI-03822">
        <name>Shaheen syndrome</name>
        <acronym>SHNS</acronym>
        <description>An autosomal recessive syndrome characterized by severe intellectual disability, hypohidrosis, dental enamel hypoplasia, and hyperkeratosis of the palms and soles. Some may develop mild microcephaly.</description>
        <dbReference type="MIM" id="615328"/>
    </disease>
    <text>The disease is caused by variants affecting the gene represented in this entry.</text>
</comment>
<comment type="miscellaneous">
    <molecule>Isoform 4</molecule>
    <text evidence="8">May be produced at very low levels due to a premature stop codon in the mRNA, leading to nonsense-mediated mRNA decay.</text>
</comment>
<comment type="similarity">
    <text evidence="8">Belongs to the COG6 family.</text>
</comment>
<comment type="sequence caution" evidence="8">
    <conflict type="erroneous translation">
        <sequence resource="EMBL-CDS" id="AAD29633"/>
    </conflict>
    <text>Wrong choice of CDS.</text>
</comment>
<proteinExistence type="evidence at protein level"/>
<keyword id="KW-0025">Alternative splicing</keyword>
<keyword id="KW-0900">Congenital disorder of glycosylation</keyword>
<keyword id="KW-0225">Disease variant</keyword>
<keyword id="KW-0333">Golgi apparatus</keyword>
<keyword id="KW-0991">Intellectual disability</keyword>
<keyword id="KW-0472">Membrane</keyword>
<keyword id="KW-0653">Protein transport</keyword>
<keyword id="KW-1267">Proteomics identification</keyword>
<keyword id="KW-1185">Reference proteome</keyword>
<keyword id="KW-0813">Transport</keyword>